<accession>Q9BPJ8</accession>
<organism>
    <name type="scientific">Conus arenatus</name>
    <name type="common">Sand-dusted cone</name>
    <dbReference type="NCBI Taxonomy" id="89451"/>
    <lineage>
        <taxon>Eukaryota</taxon>
        <taxon>Metazoa</taxon>
        <taxon>Spiralia</taxon>
        <taxon>Lophotrochozoa</taxon>
        <taxon>Mollusca</taxon>
        <taxon>Gastropoda</taxon>
        <taxon>Caenogastropoda</taxon>
        <taxon>Neogastropoda</taxon>
        <taxon>Conoidea</taxon>
        <taxon>Conidae</taxon>
        <taxon>Conus</taxon>
    </lineage>
</organism>
<reference key="1">
    <citation type="journal article" date="2001" name="Mol. Biol. Evol.">
        <title>Mechanisms for evolving hypervariability: the case of conopeptides.</title>
        <authorList>
            <person name="Conticello S.G."/>
            <person name="Gilad Y."/>
            <person name="Avidan N."/>
            <person name="Ben-Asher E."/>
            <person name="Levy Z."/>
            <person name="Fainzilber M."/>
        </authorList>
    </citation>
    <scope>NUCLEOTIDE SEQUENCE [MRNA]</scope>
    <source>
        <tissue>Venom duct</tissue>
    </source>
</reference>
<comment type="subcellular location">
    <subcellularLocation>
        <location evidence="1">Secreted</location>
    </subcellularLocation>
</comment>
<comment type="tissue specificity">
    <text>Expressed by the venom duct.</text>
</comment>
<comment type="domain">
    <text>The cysteine framework is III (CC-C-C-CC). Classified in the M-2 branch, since 2 residues stand between the fourth and the fifth cysteine residues.</text>
</comment>
<comment type="similarity">
    <text evidence="4">Belongs to the conotoxin M superfamily.</text>
</comment>
<sequence length="68" mass="7638">MMSKLGVLLTICMLLFPLTALPLDGDQPADRPAERMQDDFISEQHPLFNPIKRCCDWPCTIGCVPCCK</sequence>
<feature type="signal peptide" evidence="3">
    <location>
        <begin position="1"/>
        <end position="20"/>
    </location>
</feature>
<feature type="propeptide" id="PRO_0000404886" evidence="1">
    <location>
        <begin position="21"/>
        <end position="51"/>
    </location>
</feature>
<feature type="peptide" id="PRO_0000404887" description="Conotoxin ArMMSK-01">
    <location>
        <begin position="54"/>
        <end position="67"/>
    </location>
</feature>
<feature type="modified residue" description="4-hydroxyproline" evidence="1">
    <location>
        <position position="65"/>
    </location>
</feature>
<feature type="disulfide bond" evidence="2">
    <location>
        <begin position="54"/>
        <end position="67"/>
    </location>
</feature>
<feature type="disulfide bond" evidence="2">
    <location>
        <begin position="55"/>
        <end position="63"/>
    </location>
</feature>
<feature type="disulfide bond" evidence="2">
    <location>
        <begin position="59"/>
        <end position="66"/>
    </location>
</feature>
<evidence type="ECO:0000250" key="1"/>
<evidence type="ECO:0000250" key="2">
    <source>
        <dbReference type="UniProtKB" id="P0CI24"/>
    </source>
</evidence>
<evidence type="ECO:0000255" key="3"/>
<evidence type="ECO:0000305" key="4"/>
<dbReference type="EMBL" id="AF214925">
    <property type="protein sequence ID" value="AAG60353.1"/>
    <property type="molecule type" value="mRNA"/>
</dbReference>
<dbReference type="ConoServer" id="612">
    <property type="toxin name" value="ArMMSK-01 precursor"/>
</dbReference>
<dbReference type="GO" id="GO:0005576">
    <property type="term" value="C:extracellular region"/>
    <property type="evidence" value="ECO:0007669"/>
    <property type="project" value="UniProtKB-SubCell"/>
</dbReference>
<dbReference type="GO" id="GO:0008200">
    <property type="term" value="F:ion channel inhibitor activity"/>
    <property type="evidence" value="ECO:0007669"/>
    <property type="project" value="InterPro"/>
</dbReference>
<dbReference type="GO" id="GO:0090729">
    <property type="term" value="F:toxin activity"/>
    <property type="evidence" value="ECO:0007669"/>
    <property type="project" value="UniProtKB-KW"/>
</dbReference>
<dbReference type="InterPro" id="IPR004214">
    <property type="entry name" value="Conotoxin"/>
</dbReference>
<dbReference type="Pfam" id="PF02950">
    <property type="entry name" value="Conotoxin"/>
    <property type="match status" value="1"/>
</dbReference>
<name>M231_CONAE</name>
<protein>
    <recommendedName>
        <fullName>Conotoxin ArMMSK-01</fullName>
    </recommendedName>
</protein>
<proteinExistence type="evidence at transcript level"/>
<keyword id="KW-0165">Cleavage on pair of basic residues</keyword>
<keyword id="KW-1015">Disulfide bond</keyword>
<keyword id="KW-0379">Hydroxylation</keyword>
<keyword id="KW-0528">Neurotoxin</keyword>
<keyword id="KW-0964">Secreted</keyword>
<keyword id="KW-0732">Signal</keyword>
<keyword id="KW-0800">Toxin</keyword>